<name>KATG_GEOSM</name>
<evidence type="ECO:0000255" key="1">
    <source>
        <dbReference type="HAMAP-Rule" id="MF_01961"/>
    </source>
</evidence>
<gene>
    <name evidence="1" type="primary">katG</name>
    <name type="ordered locus">GM21_0311</name>
</gene>
<sequence>MSTDSQCPVTGRANKHAARVGRMNRDWWPNQLNLKILHQHSPLSNPMGGNFNYSEEFKALDLAAVRNDIFELMTNSQDWWPADYGHYGPLFIRMAWHSAGTYRTGDGRGGARSGSQRFAPLNSWPDNANLDKARMLLWPIKQKYGKKISWADLLIFAGNCALESMGFKTFGFGGGREDIWEPGEDIYWGAEDTWLGDKRYSGERLLENPLAAVQMGLIYVNPEGPNGNPDPLAAAKDIRETFARMAMNDEETVALIAGGHTFGKCHGAGAATHVGPEPEGASIIEQGLGWKCSLGTGRGEHTITSGLEGAWTTNPVKWDNGFFDVLFSYDWALAKSPAGAHQWIPTDPAAKGTVPDAHNPAKRHAPMMLTTDLALKLDPIYGPISKRFHEQPDLFADAFARAWFKLTHRDMGPRACYLGPEVPAEDLIWQDPLPARNHELIDDQDIAELKGKIVTSGLSVSQLVSTAWASASTFRSSDRRGGANGARIRLAPQKDWEVNQPAQLKLVLETLEGIQKQFNSAQSGGKRVSIADLIVLGGCAAVELAARNAGHEIIVPFTPGRTDAAQEQTDVVAFAPLEPAADGFRNYLKTRYSVSAEELLVDRAQLLTLSAPEMTVLIGGMRVLDANADRSRHGVFTRRPGTLTNDFFVNLLDMGTTWNATSEAEDVFEGRDRVTGEMKWTGTRVDLIFGSNSLLRAQAEVYGCKDAQEKFVVDFIAAWSKVMNLDRFDIANS</sequence>
<protein>
    <recommendedName>
        <fullName evidence="1">Catalase-peroxidase</fullName>
        <shortName evidence="1">CP</shortName>
        <ecNumber evidence="1">1.11.1.21</ecNumber>
    </recommendedName>
    <alternativeName>
        <fullName evidence="1">Peroxidase/catalase</fullName>
    </alternativeName>
</protein>
<proteinExistence type="inferred from homology"/>
<dbReference type="EC" id="1.11.1.21" evidence="1"/>
<dbReference type="EMBL" id="CP001661">
    <property type="protein sequence ID" value="ACT16392.1"/>
    <property type="molecule type" value="Genomic_DNA"/>
</dbReference>
<dbReference type="SMR" id="C6DYB7"/>
<dbReference type="STRING" id="443144.GM21_0311"/>
<dbReference type="KEGG" id="gem:GM21_0311"/>
<dbReference type="eggNOG" id="COG0376">
    <property type="taxonomic scope" value="Bacteria"/>
</dbReference>
<dbReference type="HOGENOM" id="CLU_025424_2_0_7"/>
<dbReference type="OrthoDB" id="9759743at2"/>
<dbReference type="GO" id="GO:0005829">
    <property type="term" value="C:cytosol"/>
    <property type="evidence" value="ECO:0007669"/>
    <property type="project" value="TreeGrafter"/>
</dbReference>
<dbReference type="GO" id="GO:0004096">
    <property type="term" value="F:catalase activity"/>
    <property type="evidence" value="ECO:0007669"/>
    <property type="project" value="UniProtKB-UniRule"/>
</dbReference>
<dbReference type="GO" id="GO:0020037">
    <property type="term" value="F:heme binding"/>
    <property type="evidence" value="ECO:0007669"/>
    <property type="project" value="InterPro"/>
</dbReference>
<dbReference type="GO" id="GO:0046872">
    <property type="term" value="F:metal ion binding"/>
    <property type="evidence" value="ECO:0007669"/>
    <property type="project" value="UniProtKB-KW"/>
</dbReference>
<dbReference type="GO" id="GO:0070301">
    <property type="term" value="P:cellular response to hydrogen peroxide"/>
    <property type="evidence" value="ECO:0007669"/>
    <property type="project" value="TreeGrafter"/>
</dbReference>
<dbReference type="GO" id="GO:0042744">
    <property type="term" value="P:hydrogen peroxide catabolic process"/>
    <property type="evidence" value="ECO:0007669"/>
    <property type="project" value="UniProtKB-KW"/>
</dbReference>
<dbReference type="CDD" id="cd00649">
    <property type="entry name" value="catalase_peroxidase_1"/>
    <property type="match status" value="1"/>
</dbReference>
<dbReference type="CDD" id="cd08200">
    <property type="entry name" value="catalase_peroxidase_2"/>
    <property type="match status" value="1"/>
</dbReference>
<dbReference type="FunFam" id="1.10.420.10:FF:000002">
    <property type="entry name" value="Catalase-peroxidase"/>
    <property type="match status" value="1"/>
</dbReference>
<dbReference type="FunFam" id="1.10.420.10:FF:000004">
    <property type="entry name" value="Catalase-peroxidase"/>
    <property type="match status" value="1"/>
</dbReference>
<dbReference type="FunFam" id="1.10.520.10:FF:000002">
    <property type="entry name" value="Catalase-peroxidase"/>
    <property type="match status" value="1"/>
</dbReference>
<dbReference type="Gene3D" id="1.10.520.10">
    <property type="match status" value="2"/>
</dbReference>
<dbReference type="Gene3D" id="1.10.420.10">
    <property type="entry name" value="Peroxidase, domain 2"/>
    <property type="match status" value="2"/>
</dbReference>
<dbReference type="HAMAP" id="MF_01961">
    <property type="entry name" value="Catal_peroxid"/>
    <property type="match status" value="1"/>
</dbReference>
<dbReference type="InterPro" id="IPR000763">
    <property type="entry name" value="Catalase_peroxidase"/>
</dbReference>
<dbReference type="InterPro" id="IPR002016">
    <property type="entry name" value="Haem_peroxidase"/>
</dbReference>
<dbReference type="InterPro" id="IPR010255">
    <property type="entry name" value="Haem_peroxidase_sf"/>
</dbReference>
<dbReference type="InterPro" id="IPR019794">
    <property type="entry name" value="Peroxidases_AS"/>
</dbReference>
<dbReference type="InterPro" id="IPR019793">
    <property type="entry name" value="Peroxidases_heam-ligand_BS"/>
</dbReference>
<dbReference type="NCBIfam" id="TIGR00198">
    <property type="entry name" value="cat_per_HPI"/>
    <property type="match status" value="1"/>
</dbReference>
<dbReference type="NCBIfam" id="NF011635">
    <property type="entry name" value="PRK15061.1"/>
    <property type="match status" value="1"/>
</dbReference>
<dbReference type="PANTHER" id="PTHR30555:SF0">
    <property type="entry name" value="CATALASE-PEROXIDASE"/>
    <property type="match status" value="1"/>
</dbReference>
<dbReference type="PANTHER" id="PTHR30555">
    <property type="entry name" value="HYDROPEROXIDASE I, BIFUNCTIONAL CATALASE-PEROXIDASE"/>
    <property type="match status" value="1"/>
</dbReference>
<dbReference type="Pfam" id="PF00141">
    <property type="entry name" value="peroxidase"/>
    <property type="match status" value="2"/>
</dbReference>
<dbReference type="PRINTS" id="PR00460">
    <property type="entry name" value="BPEROXIDASE"/>
</dbReference>
<dbReference type="PRINTS" id="PR00458">
    <property type="entry name" value="PEROXIDASE"/>
</dbReference>
<dbReference type="SUPFAM" id="SSF48113">
    <property type="entry name" value="Heme-dependent peroxidases"/>
    <property type="match status" value="2"/>
</dbReference>
<dbReference type="PROSITE" id="PS00435">
    <property type="entry name" value="PEROXIDASE_1"/>
    <property type="match status" value="1"/>
</dbReference>
<dbReference type="PROSITE" id="PS00436">
    <property type="entry name" value="PEROXIDASE_2"/>
    <property type="match status" value="1"/>
</dbReference>
<dbReference type="PROSITE" id="PS50873">
    <property type="entry name" value="PEROXIDASE_4"/>
    <property type="match status" value="1"/>
</dbReference>
<keyword id="KW-0349">Heme</keyword>
<keyword id="KW-0376">Hydrogen peroxide</keyword>
<keyword id="KW-0408">Iron</keyword>
<keyword id="KW-0479">Metal-binding</keyword>
<keyword id="KW-0560">Oxidoreductase</keyword>
<keyword id="KW-0575">Peroxidase</keyword>
<feature type="chain" id="PRO_1000216223" description="Catalase-peroxidase">
    <location>
        <begin position="1"/>
        <end position="733"/>
    </location>
</feature>
<feature type="active site" description="Proton acceptor" evidence="1">
    <location>
        <position position="97"/>
    </location>
</feature>
<feature type="binding site" description="axial binding residue" evidence="1">
    <location>
        <position position="260"/>
    </location>
    <ligand>
        <name>heme b</name>
        <dbReference type="ChEBI" id="CHEBI:60344"/>
    </ligand>
    <ligandPart>
        <name>Fe</name>
        <dbReference type="ChEBI" id="CHEBI:18248"/>
    </ligandPart>
</feature>
<feature type="site" description="Transition state stabilizer" evidence="1">
    <location>
        <position position="93"/>
    </location>
</feature>
<feature type="cross-link" description="Tryptophyl-tyrosyl-methioninium (Trp-Tyr) (with M-245)" evidence="1">
    <location>
        <begin position="96"/>
        <end position="219"/>
    </location>
</feature>
<feature type="cross-link" description="Tryptophyl-tyrosyl-methioninium (Tyr-Met) (with W-96)" evidence="1">
    <location>
        <begin position="219"/>
        <end position="245"/>
    </location>
</feature>
<organism>
    <name type="scientific">Geobacter sp. (strain M21)</name>
    <dbReference type="NCBI Taxonomy" id="443144"/>
    <lineage>
        <taxon>Bacteria</taxon>
        <taxon>Pseudomonadati</taxon>
        <taxon>Thermodesulfobacteriota</taxon>
        <taxon>Desulfuromonadia</taxon>
        <taxon>Geobacterales</taxon>
        <taxon>Geobacteraceae</taxon>
        <taxon>Geobacter</taxon>
    </lineage>
</organism>
<comment type="function">
    <text evidence="1">Bifunctional enzyme with both catalase and broad-spectrum peroxidase activity.</text>
</comment>
<comment type="catalytic activity">
    <reaction evidence="1">
        <text>H2O2 + AH2 = A + 2 H2O</text>
        <dbReference type="Rhea" id="RHEA:30275"/>
        <dbReference type="ChEBI" id="CHEBI:13193"/>
        <dbReference type="ChEBI" id="CHEBI:15377"/>
        <dbReference type="ChEBI" id="CHEBI:16240"/>
        <dbReference type="ChEBI" id="CHEBI:17499"/>
        <dbReference type="EC" id="1.11.1.21"/>
    </reaction>
</comment>
<comment type="catalytic activity">
    <reaction evidence="1">
        <text>2 H2O2 = O2 + 2 H2O</text>
        <dbReference type="Rhea" id="RHEA:20309"/>
        <dbReference type="ChEBI" id="CHEBI:15377"/>
        <dbReference type="ChEBI" id="CHEBI:15379"/>
        <dbReference type="ChEBI" id="CHEBI:16240"/>
        <dbReference type="EC" id="1.11.1.21"/>
    </reaction>
</comment>
<comment type="cofactor">
    <cofactor evidence="1">
        <name>heme b</name>
        <dbReference type="ChEBI" id="CHEBI:60344"/>
    </cofactor>
    <text evidence="1">Binds 1 heme b (iron(II)-protoporphyrin IX) group per dimer.</text>
</comment>
<comment type="subunit">
    <text evidence="1">Homodimer or homotetramer.</text>
</comment>
<comment type="PTM">
    <text evidence="1">Formation of the three residue Trp-Tyr-Met cross-link is important for the catalase, but not the peroxidase activity of the enzyme.</text>
</comment>
<comment type="similarity">
    <text evidence="1">Belongs to the peroxidase family. Peroxidase/catalase subfamily.</text>
</comment>
<accession>C6DYB7</accession>
<reference key="1">
    <citation type="submission" date="2009-07" db="EMBL/GenBank/DDBJ databases">
        <title>Complete sequence of Geobacter sp. M21.</title>
        <authorList>
            <consortium name="US DOE Joint Genome Institute"/>
            <person name="Lucas S."/>
            <person name="Copeland A."/>
            <person name="Lapidus A."/>
            <person name="Glavina del Rio T."/>
            <person name="Dalin E."/>
            <person name="Tice H."/>
            <person name="Bruce D."/>
            <person name="Goodwin L."/>
            <person name="Pitluck S."/>
            <person name="Saunders E."/>
            <person name="Brettin T."/>
            <person name="Detter J.C."/>
            <person name="Han C."/>
            <person name="Larimer F."/>
            <person name="Land M."/>
            <person name="Hauser L."/>
            <person name="Kyrpides N."/>
            <person name="Ovchinnikova G."/>
            <person name="Lovley D."/>
        </authorList>
    </citation>
    <scope>NUCLEOTIDE SEQUENCE [LARGE SCALE GENOMIC DNA]</scope>
    <source>
        <strain>M21</strain>
    </source>
</reference>